<comment type="function">
    <text evidence="1">Major role in the synthesis of nucleoside triphosphates other than ATP. The ATP gamma phosphate is transferred to the NDP beta phosphate via a ping-pong mechanism, using a phosphorylated active-site intermediate.</text>
</comment>
<comment type="catalytic activity">
    <reaction evidence="1">
        <text>a 2'-deoxyribonucleoside 5'-diphosphate + ATP = a 2'-deoxyribonucleoside 5'-triphosphate + ADP</text>
        <dbReference type="Rhea" id="RHEA:44640"/>
        <dbReference type="ChEBI" id="CHEBI:30616"/>
        <dbReference type="ChEBI" id="CHEBI:61560"/>
        <dbReference type="ChEBI" id="CHEBI:73316"/>
        <dbReference type="ChEBI" id="CHEBI:456216"/>
        <dbReference type="EC" id="2.7.4.6"/>
    </reaction>
</comment>
<comment type="catalytic activity">
    <reaction evidence="1">
        <text>a ribonucleoside 5'-diphosphate + ATP = a ribonucleoside 5'-triphosphate + ADP</text>
        <dbReference type="Rhea" id="RHEA:18113"/>
        <dbReference type="ChEBI" id="CHEBI:30616"/>
        <dbReference type="ChEBI" id="CHEBI:57930"/>
        <dbReference type="ChEBI" id="CHEBI:61557"/>
        <dbReference type="ChEBI" id="CHEBI:456216"/>
        <dbReference type="EC" id="2.7.4.6"/>
    </reaction>
</comment>
<comment type="cofactor">
    <cofactor evidence="1">
        <name>Mg(2+)</name>
        <dbReference type="ChEBI" id="CHEBI:18420"/>
    </cofactor>
</comment>
<comment type="subunit">
    <text evidence="1">Homotetramer.</text>
</comment>
<comment type="subcellular location">
    <subcellularLocation>
        <location evidence="1">Cytoplasm</location>
    </subcellularLocation>
</comment>
<comment type="similarity">
    <text evidence="1">Belongs to the NDK family.</text>
</comment>
<feature type="chain" id="PRO_1000135255" description="Nucleoside diphosphate kinase">
    <location>
        <begin position="1"/>
        <end position="143"/>
    </location>
</feature>
<feature type="active site" description="Pros-phosphohistidine intermediate" evidence="1">
    <location>
        <position position="117"/>
    </location>
</feature>
<feature type="binding site" evidence="1">
    <location>
        <position position="11"/>
    </location>
    <ligand>
        <name>ATP</name>
        <dbReference type="ChEBI" id="CHEBI:30616"/>
    </ligand>
</feature>
<feature type="binding site" evidence="1">
    <location>
        <position position="59"/>
    </location>
    <ligand>
        <name>ATP</name>
        <dbReference type="ChEBI" id="CHEBI:30616"/>
    </ligand>
</feature>
<feature type="binding site" evidence="1">
    <location>
        <position position="87"/>
    </location>
    <ligand>
        <name>ATP</name>
        <dbReference type="ChEBI" id="CHEBI:30616"/>
    </ligand>
</feature>
<feature type="binding site" evidence="1">
    <location>
        <position position="93"/>
    </location>
    <ligand>
        <name>ATP</name>
        <dbReference type="ChEBI" id="CHEBI:30616"/>
    </ligand>
</feature>
<feature type="binding site" evidence="1">
    <location>
        <position position="104"/>
    </location>
    <ligand>
        <name>ATP</name>
        <dbReference type="ChEBI" id="CHEBI:30616"/>
    </ligand>
</feature>
<feature type="binding site" evidence="1">
    <location>
        <position position="114"/>
    </location>
    <ligand>
        <name>ATP</name>
        <dbReference type="ChEBI" id="CHEBI:30616"/>
    </ligand>
</feature>
<evidence type="ECO:0000255" key="1">
    <source>
        <dbReference type="HAMAP-Rule" id="MF_00451"/>
    </source>
</evidence>
<accession>B7LDB0</accession>
<dbReference type="EC" id="2.7.4.6" evidence="1"/>
<dbReference type="EMBL" id="CU928145">
    <property type="protein sequence ID" value="CAU98676.1"/>
    <property type="molecule type" value="Genomic_DNA"/>
</dbReference>
<dbReference type="RefSeq" id="WP_000963837.1">
    <property type="nucleotide sequence ID" value="NC_011748.1"/>
</dbReference>
<dbReference type="SMR" id="B7LDB0"/>
<dbReference type="GeneID" id="93774618"/>
<dbReference type="KEGG" id="eck:EC55989_2803"/>
<dbReference type="HOGENOM" id="CLU_060216_8_1_6"/>
<dbReference type="Proteomes" id="UP000000746">
    <property type="component" value="Chromosome"/>
</dbReference>
<dbReference type="GO" id="GO:0005737">
    <property type="term" value="C:cytoplasm"/>
    <property type="evidence" value="ECO:0007669"/>
    <property type="project" value="UniProtKB-SubCell"/>
</dbReference>
<dbReference type="GO" id="GO:0005524">
    <property type="term" value="F:ATP binding"/>
    <property type="evidence" value="ECO:0007669"/>
    <property type="project" value="UniProtKB-UniRule"/>
</dbReference>
<dbReference type="GO" id="GO:0046872">
    <property type="term" value="F:metal ion binding"/>
    <property type="evidence" value="ECO:0007669"/>
    <property type="project" value="UniProtKB-KW"/>
</dbReference>
<dbReference type="GO" id="GO:0004550">
    <property type="term" value="F:nucleoside diphosphate kinase activity"/>
    <property type="evidence" value="ECO:0007669"/>
    <property type="project" value="UniProtKB-UniRule"/>
</dbReference>
<dbReference type="GO" id="GO:0006241">
    <property type="term" value="P:CTP biosynthetic process"/>
    <property type="evidence" value="ECO:0007669"/>
    <property type="project" value="UniProtKB-UniRule"/>
</dbReference>
<dbReference type="GO" id="GO:0006183">
    <property type="term" value="P:GTP biosynthetic process"/>
    <property type="evidence" value="ECO:0007669"/>
    <property type="project" value="UniProtKB-UniRule"/>
</dbReference>
<dbReference type="GO" id="GO:0006228">
    <property type="term" value="P:UTP biosynthetic process"/>
    <property type="evidence" value="ECO:0007669"/>
    <property type="project" value="UniProtKB-UniRule"/>
</dbReference>
<dbReference type="CDD" id="cd04413">
    <property type="entry name" value="NDPk_I"/>
    <property type="match status" value="1"/>
</dbReference>
<dbReference type="FunFam" id="3.30.70.141:FF:000001">
    <property type="entry name" value="Nucleoside diphosphate kinase"/>
    <property type="match status" value="1"/>
</dbReference>
<dbReference type="Gene3D" id="3.30.70.141">
    <property type="entry name" value="Nucleoside diphosphate kinase-like domain"/>
    <property type="match status" value="1"/>
</dbReference>
<dbReference type="HAMAP" id="MF_00451">
    <property type="entry name" value="NDP_kinase"/>
    <property type="match status" value="1"/>
</dbReference>
<dbReference type="InterPro" id="IPR034907">
    <property type="entry name" value="NDK-like_dom"/>
</dbReference>
<dbReference type="InterPro" id="IPR036850">
    <property type="entry name" value="NDK-like_dom_sf"/>
</dbReference>
<dbReference type="InterPro" id="IPR001564">
    <property type="entry name" value="Nucleoside_diP_kinase"/>
</dbReference>
<dbReference type="InterPro" id="IPR023005">
    <property type="entry name" value="Nucleoside_diP_kinase_AS"/>
</dbReference>
<dbReference type="NCBIfam" id="NF001908">
    <property type="entry name" value="PRK00668.1"/>
    <property type="match status" value="1"/>
</dbReference>
<dbReference type="PANTHER" id="PTHR46161">
    <property type="entry name" value="NUCLEOSIDE DIPHOSPHATE KINASE"/>
    <property type="match status" value="1"/>
</dbReference>
<dbReference type="PANTHER" id="PTHR46161:SF3">
    <property type="entry name" value="NUCLEOSIDE DIPHOSPHATE KINASE DDB_G0292928-RELATED"/>
    <property type="match status" value="1"/>
</dbReference>
<dbReference type="Pfam" id="PF00334">
    <property type="entry name" value="NDK"/>
    <property type="match status" value="1"/>
</dbReference>
<dbReference type="PRINTS" id="PR01243">
    <property type="entry name" value="NUCDPKINASE"/>
</dbReference>
<dbReference type="SMART" id="SM00562">
    <property type="entry name" value="NDK"/>
    <property type="match status" value="1"/>
</dbReference>
<dbReference type="SUPFAM" id="SSF54919">
    <property type="entry name" value="Nucleoside diphosphate kinase, NDK"/>
    <property type="match status" value="1"/>
</dbReference>
<dbReference type="PROSITE" id="PS00469">
    <property type="entry name" value="NDPK"/>
    <property type="match status" value="1"/>
</dbReference>
<dbReference type="PROSITE" id="PS51374">
    <property type="entry name" value="NDPK_LIKE"/>
    <property type="match status" value="1"/>
</dbReference>
<reference key="1">
    <citation type="journal article" date="2009" name="PLoS Genet.">
        <title>Organised genome dynamics in the Escherichia coli species results in highly diverse adaptive paths.</title>
        <authorList>
            <person name="Touchon M."/>
            <person name="Hoede C."/>
            <person name="Tenaillon O."/>
            <person name="Barbe V."/>
            <person name="Baeriswyl S."/>
            <person name="Bidet P."/>
            <person name="Bingen E."/>
            <person name="Bonacorsi S."/>
            <person name="Bouchier C."/>
            <person name="Bouvet O."/>
            <person name="Calteau A."/>
            <person name="Chiapello H."/>
            <person name="Clermont O."/>
            <person name="Cruveiller S."/>
            <person name="Danchin A."/>
            <person name="Diard M."/>
            <person name="Dossat C."/>
            <person name="Karoui M.E."/>
            <person name="Frapy E."/>
            <person name="Garry L."/>
            <person name="Ghigo J.M."/>
            <person name="Gilles A.M."/>
            <person name="Johnson J."/>
            <person name="Le Bouguenec C."/>
            <person name="Lescat M."/>
            <person name="Mangenot S."/>
            <person name="Martinez-Jehanne V."/>
            <person name="Matic I."/>
            <person name="Nassif X."/>
            <person name="Oztas S."/>
            <person name="Petit M.A."/>
            <person name="Pichon C."/>
            <person name="Rouy Z."/>
            <person name="Ruf C.S."/>
            <person name="Schneider D."/>
            <person name="Tourret J."/>
            <person name="Vacherie B."/>
            <person name="Vallenet D."/>
            <person name="Medigue C."/>
            <person name="Rocha E.P.C."/>
            <person name="Denamur E."/>
        </authorList>
    </citation>
    <scope>NUCLEOTIDE SEQUENCE [LARGE SCALE GENOMIC DNA]</scope>
    <source>
        <strain>55989 / EAEC</strain>
    </source>
</reference>
<organism>
    <name type="scientific">Escherichia coli (strain 55989 / EAEC)</name>
    <dbReference type="NCBI Taxonomy" id="585055"/>
    <lineage>
        <taxon>Bacteria</taxon>
        <taxon>Pseudomonadati</taxon>
        <taxon>Pseudomonadota</taxon>
        <taxon>Gammaproteobacteria</taxon>
        <taxon>Enterobacterales</taxon>
        <taxon>Enterobacteriaceae</taxon>
        <taxon>Escherichia</taxon>
    </lineage>
</organism>
<proteinExistence type="inferred from homology"/>
<name>NDK_ECO55</name>
<protein>
    <recommendedName>
        <fullName evidence="1">Nucleoside diphosphate kinase</fullName>
        <shortName evidence="1">NDK</shortName>
        <shortName evidence="1">NDP kinase</shortName>
        <ecNumber evidence="1">2.7.4.6</ecNumber>
    </recommendedName>
    <alternativeName>
        <fullName evidence="1">Nucleoside-2-P kinase</fullName>
    </alternativeName>
</protein>
<sequence>MAIERTFSIIKPNAVAKNVIGNIFARFEAAGFKIVGTKMLHLTVEQARGFYAEHDGKPFFDGLVEFMTSGPIVVSVLEGENAVQRHRDLLGATNPANALAGTLRADYADSLTENGTHGSDSVESAAREIAYFFGEGEVCPRTR</sequence>
<gene>
    <name evidence="1" type="primary">ndk</name>
    <name type="ordered locus">EC55989_2803</name>
</gene>
<keyword id="KW-0067">ATP-binding</keyword>
<keyword id="KW-0963">Cytoplasm</keyword>
<keyword id="KW-0418">Kinase</keyword>
<keyword id="KW-0460">Magnesium</keyword>
<keyword id="KW-0479">Metal-binding</keyword>
<keyword id="KW-0546">Nucleotide metabolism</keyword>
<keyword id="KW-0547">Nucleotide-binding</keyword>
<keyword id="KW-0597">Phosphoprotein</keyword>
<keyword id="KW-1185">Reference proteome</keyword>
<keyword id="KW-0808">Transferase</keyword>